<organism>
    <name type="scientific">Porphyromonas gingivalis (strain ATCC BAA-308 / W83)</name>
    <dbReference type="NCBI Taxonomy" id="242619"/>
    <lineage>
        <taxon>Bacteria</taxon>
        <taxon>Pseudomonadati</taxon>
        <taxon>Bacteroidota</taxon>
        <taxon>Bacteroidia</taxon>
        <taxon>Bacteroidales</taxon>
        <taxon>Porphyromonadaceae</taxon>
        <taxon>Porphyromonas</taxon>
    </lineage>
</organism>
<sequence>MNRSSFDLLSTVEYGGCSAKLDPAKLSELLHDIPLPVDSRIMVDVSTHDDAGVYRLNDDTALIVTTDFFPPVCSDPYTFGRIAAANALSDVYAMGGRPLLVLNLTMFPSEGIPVEVLADILRGGQQTIDESGAFTMGGHTIDDPIPKYGLAVTGIVHPEHLVTNAGVRAGQCLVLTKPLGIGVAMAAHRLGLIGSEVYEAAIGQMCLLNRAGAELMQKYGIRGATDITGFGLLGHAKGLAEASDVCLHIDSRSVPVLPECLSLLRDGCIPGAAFRNLRFVGDMLRADCPTEYKMLLADAQTSGGLLMAVDADRAEDLVADLHRTGLHPFAAIIGYATDAEDAAKLIVT</sequence>
<comment type="function">
    <text evidence="1">Synthesizes selenophosphate from selenide and ATP.</text>
</comment>
<comment type="catalytic activity">
    <reaction evidence="1">
        <text>hydrogenselenide + ATP + H2O = selenophosphate + AMP + phosphate + 2 H(+)</text>
        <dbReference type="Rhea" id="RHEA:18737"/>
        <dbReference type="ChEBI" id="CHEBI:15377"/>
        <dbReference type="ChEBI" id="CHEBI:15378"/>
        <dbReference type="ChEBI" id="CHEBI:16144"/>
        <dbReference type="ChEBI" id="CHEBI:29317"/>
        <dbReference type="ChEBI" id="CHEBI:30616"/>
        <dbReference type="ChEBI" id="CHEBI:43474"/>
        <dbReference type="ChEBI" id="CHEBI:456215"/>
        <dbReference type="EC" id="2.7.9.3"/>
    </reaction>
</comment>
<comment type="cofactor">
    <cofactor evidence="1">
        <name>Mg(2+)</name>
        <dbReference type="ChEBI" id="CHEBI:18420"/>
    </cofactor>
    <text evidence="1">Binds 1 Mg(2+) ion per monomer.</text>
</comment>
<comment type="subunit">
    <text evidence="1">Homodimer.</text>
</comment>
<comment type="similarity">
    <text evidence="1">Belongs to the selenophosphate synthase 1 family. Class I subfamily.</text>
</comment>
<dbReference type="EC" id="2.7.9.3" evidence="1"/>
<dbReference type="EMBL" id="AE015924">
    <property type="protein sequence ID" value="AAQ66755.1"/>
    <property type="molecule type" value="Genomic_DNA"/>
</dbReference>
<dbReference type="RefSeq" id="WP_004584748.1">
    <property type="nucleotide sequence ID" value="NC_002950.2"/>
</dbReference>
<dbReference type="SMR" id="Q7MU19"/>
<dbReference type="STRING" id="242619.PG_1753"/>
<dbReference type="EnsemblBacteria" id="AAQ66755">
    <property type="protein sequence ID" value="AAQ66755"/>
    <property type="gene ID" value="PG_1753"/>
</dbReference>
<dbReference type="KEGG" id="pgi:PG_1753"/>
<dbReference type="eggNOG" id="COG0709">
    <property type="taxonomic scope" value="Bacteria"/>
</dbReference>
<dbReference type="HOGENOM" id="CLU_032859_0_1_10"/>
<dbReference type="Proteomes" id="UP000000588">
    <property type="component" value="Chromosome"/>
</dbReference>
<dbReference type="GO" id="GO:0005737">
    <property type="term" value="C:cytoplasm"/>
    <property type="evidence" value="ECO:0007669"/>
    <property type="project" value="TreeGrafter"/>
</dbReference>
<dbReference type="GO" id="GO:0005524">
    <property type="term" value="F:ATP binding"/>
    <property type="evidence" value="ECO:0007669"/>
    <property type="project" value="UniProtKB-UniRule"/>
</dbReference>
<dbReference type="GO" id="GO:0000287">
    <property type="term" value="F:magnesium ion binding"/>
    <property type="evidence" value="ECO:0007669"/>
    <property type="project" value="UniProtKB-UniRule"/>
</dbReference>
<dbReference type="GO" id="GO:0004756">
    <property type="term" value="F:selenide, water dikinase activity"/>
    <property type="evidence" value="ECO:0007669"/>
    <property type="project" value="UniProtKB-UniRule"/>
</dbReference>
<dbReference type="GO" id="GO:0016260">
    <property type="term" value="P:selenocysteine biosynthetic process"/>
    <property type="evidence" value="ECO:0007669"/>
    <property type="project" value="InterPro"/>
</dbReference>
<dbReference type="CDD" id="cd02195">
    <property type="entry name" value="SelD"/>
    <property type="match status" value="1"/>
</dbReference>
<dbReference type="FunFam" id="3.30.1330.10:FF:000003">
    <property type="entry name" value="Selenide, water dikinase"/>
    <property type="match status" value="1"/>
</dbReference>
<dbReference type="Gene3D" id="3.90.650.10">
    <property type="entry name" value="PurM-like C-terminal domain"/>
    <property type="match status" value="1"/>
</dbReference>
<dbReference type="Gene3D" id="3.30.1330.10">
    <property type="entry name" value="PurM-like, N-terminal domain"/>
    <property type="match status" value="1"/>
</dbReference>
<dbReference type="HAMAP" id="MF_00625">
    <property type="entry name" value="SelD"/>
    <property type="match status" value="1"/>
</dbReference>
<dbReference type="InterPro" id="IPR010918">
    <property type="entry name" value="PurM-like_C_dom"/>
</dbReference>
<dbReference type="InterPro" id="IPR036676">
    <property type="entry name" value="PurM-like_C_sf"/>
</dbReference>
<dbReference type="InterPro" id="IPR016188">
    <property type="entry name" value="PurM-like_N"/>
</dbReference>
<dbReference type="InterPro" id="IPR036921">
    <property type="entry name" value="PurM-like_N_sf"/>
</dbReference>
<dbReference type="InterPro" id="IPR023061">
    <property type="entry name" value="SelD_I"/>
</dbReference>
<dbReference type="InterPro" id="IPR004536">
    <property type="entry name" value="SPS/SelD"/>
</dbReference>
<dbReference type="NCBIfam" id="NF002098">
    <property type="entry name" value="PRK00943.1"/>
    <property type="match status" value="1"/>
</dbReference>
<dbReference type="NCBIfam" id="TIGR00476">
    <property type="entry name" value="selD"/>
    <property type="match status" value="1"/>
</dbReference>
<dbReference type="PANTHER" id="PTHR10256:SF0">
    <property type="entry name" value="INACTIVE SELENIDE, WATER DIKINASE-LIKE PROTEIN-RELATED"/>
    <property type="match status" value="1"/>
</dbReference>
<dbReference type="PANTHER" id="PTHR10256">
    <property type="entry name" value="SELENIDE, WATER DIKINASE"/>
    <property type="match status" value="1"/>
</dbReference>
<dbReference type="Pfam" id="PF00586">
    <property type="entry name" value="AIRS"/>
    <property type="match status" value="1"/>
</dbReference>
<dbReference type="Pfam" id="PF02769">
    <property type="entry name" value="AIRS_C"/>
    <property type="match status" value="1"/>
</dbReference>
<dbReference type="PIRSF" id="PIRSF036407">
    <property type="entry name" value="Selenphspht_syn"/>
    <property type="match status" value="1"/>
</dbReference>
<dbReference type="SUPFAM" id="SSF56042">
    <property type="entry name" value="PurM C-terminal domain-like"/>
    <property type="match status" value="1"/>
</dbReference>
<dbReference type="SUPFAM" id="SSF55326">
    <property type="entry name" value="PurM N-terminal domain-like"/>
    <property type="match status" value="1"/>
</dbReference>
<keyword id="KW-0067">ATP-binding</keyword>
<keyword id="KW-0418">Kinase</keyword>
<keyword id="KW-0460">Magnesium</keyword>
<keyword id="KW-0479">Metal-binding</keyword>
<keyword id="KW-0547">Nucleotide-binding</keyword>
<keyword id="KW-1185">Reference proteome</keyword>
<keyword id="KW-0711">Selenium</keyword>
<keyword id="KW-0808">Transferase</keyword>
<proteinExistence type="inferred from homology"/>
<feature type="chain" id="PRO_0000127631" description="Selenide, water dikinase">
    <location>
        <begin position="1"/>
        <end position="348"/>
    </location>
</feature>
<feature type="active site" evidence="1">
    <location>
        <position position="17"/>
    </location>
</feature>
<feature type="binding site" description="in other chain" evidence="1">
    <location>
        <position position="20"/>
    </location>
    <ligand>
        <name>ATP</name>
        <dbReference type="ChEBI" id="CHEBI:30616"/>
        <note>ligand shared between dimeric partners</note>
    </ligand>
</feature>
<feature type="binding site" description="in other chain" evidence="1">
    <location>
        <begin position="47"/>
        <end position="49"/>
    </location>
    <ligand>
        <name>ATP</name>
        <dbReference type="ChEBI" id="CHEBI:30616"/>
        <note>ligand shared between dimeric partners</note>
    </ligand>
</feature>
<feature type="binding site" evidence="1">
    <location>
        <position position="50"/>
    </location>
    <ligand>
        <name>Mg(2+)</name>
        <dbReference type="ChEBI" id="CHEBI:18420"/>
    </ligand>
</feature>
<feature type="binding site" description="in other chain" evidence="1">
    <location>
        <position position="67"/>
    </location>
    <ligand>
        <name>ATP</name>
        <dbReference type="ChEBI" id="CHEBI:30616"/>
        <note>ligand shared between dimeric partners</note>
    </ligand>
</feature>
<feature type="binding site" description="in other chain" evidence="1">
    <location>
        <position position="90"/>
    </location>
    <ligand>
        <name>ATP</name>
        <dbReference type="ChEBI" id="CHEBI:30616"/>
        <note>ligand shared between dimeric partners</note>
    </ligand>
</feature>
<feature type="binding site" evidence="1">
    <location>
        <position position="90"/>
    </location>
    <ligand>
        <name>Mg(2+)</name>
        <dbReference type="ChEBI" id="CHEBI:18420"/>
    </ligand>
</feature>
<feature type="binding site" evidence="1">
    <location>
        <begin position="138"/>
        <end position="140"/>
    </location>
    <ligand>
        <name>ATP</name>
        <dbReference type="ChEBI" id="CHEBI:30616"/>
        <note>ligand shared between dimeric partners</note>
    </ligand>
</feature>
<feature type="binding site" evidence="1">
    <location>
        <position position="226"/>
    </location>
    <ligand>
        <name>Mg(2+)</name>
        <dbReference type="ChEBI" id="CHEBI:18420"/>
    </ligand>
</feature>
<feature type="site" description="Important for catalytic activity" evidence="1">
    <location>
        <position position="20"/>
    </location>
</feature>
<evidence type="ECO:0000255" key="1">
    <source>
        <dbReference type="HAMAP-Rule" id="MF_00625"/>
    </source>
</evidence>
<name>SELD_PORGI</name>
<accession>Q7MU19</accession>
<reference key="1">
    <citation type="journal article" date="2003" name="J. Bacteriol.">
        <title>Complete genome sequence of the oral pathogenic bacterium Porphyromonas gingivalis strain W83.</title>
        <authorList>
            <person name="Nelson K.E."/>
            <person name="Fleischmann R.D."/>
            <person name="DeBoy R.T."/>
            <person name="Paulsen I.T."/>
            <person name="Fouts D.E."/>
            <person name="Eisen J.A."/>
            <person name="Daugherty S.C."/>
            <person name="Dodson R.J."/>
            <person name="Durkin A.S."/>
            <person name="Gwinn M.L."/>
            <person name="Haft D.H."/>
            <person name="Kolonay J.F."/>
            <person name="Nelson W.C."/>
            <person name="Mason T.M."/>
            <person name="Tallon L."/>
            <person name="Gray J."/>
            <person name="Granger D."/>
            <person name="Tettelin H."/>
            <person name="Dong H."/>
            <person name="Galvin J.L."/>
            <person name="Duncan M.J."/>
            <person name="Dewhirst F.E."/>
            <person name="Fraser C.M."/>
        </authorList>
    </citation>
    <scope>NUCLEOTIDE SEQUENCE [LARGE SCALE GENOMIC DNA]</scope>
    <source>
        <strain>ATCC BAA-308 / W83</strain>
    </source>
</reference>
<gene>
    <name evidence="1" type="primary">selD</name>
    <name type="ordered locus">PG_1753</name>
</gene>
<protein>
    <recommendedName>
        <fullName evidence="1">Selenide, water dikinase</fullName>
        <ecNumber evidence="1">2.7.9.3</ecNumber>
    </recommendedName>
    <alternativeName>
        <fullName evidence="1">Selenium donor protein</fullName>
    </alternativeName>
    <alternativeName>
        <fullName evidence="1">Selenophosphate synthase</fullName>
    </alternativeName>
</protein>